<comment type="function">
    <text evidence="1">May play a role in DNA repair. It seems to be involved in an RecBC-independent recombinational process of DNA repair. It may act with RecF and RecO.</text>
</comment>
<comment type="similarity">
    <text evidence="1">Belongs to the RecR family.</text>
</comment>
<name>RECR_NOCFA</name>
<keyword id="KW-0227">DNA damage</keyword>
<keyword id="KW-0233">DNA recombination</keyword>
<keyword id="KW-0234">DNA repair</keyword>
<keyword id="KW-0479">Metal-binding</keyword>
<keyword id="KW-1185">Reference proteome</keyword>
<keyword id="KW-0862">Zinc</keyword>
<keyword id="KW-0863">Zinc-finger</keyword>
<proteinExistence type="inferred from homology"/>
<evidence type="ECO:0000255" key="1">
    <source>
        <dbReference type="HAMAP-Rule" id="MF_00017"/>
    </source>
</evidence>
<gene>
    <name evidence="1" type="primary">recR</name>
    <name type="ordered locus">NFA_2950</name>
</gene>
<sequence>MYEGPVQDLIDELGKLPGVGPKSAQRIAFHLLQVEPPEIDRLQAALQKVRDGVQFCVVCGTVSDGELCRICADPRRDRTMICVVEEPKDVQAIERTREFRGRYHVLGGALDPLSGVGPDQLRIRELLARIGNQDDGVDVAEVIIATDPNTEGEATATYLVRMLRDFPGLTVTRLASGLPMGGDLEFADELTLGRALSGRRAL</sequence>
<dbReference type="EMBL" id="AP006618">
    <property type="protein sequence ID" value="BAD55137.1"/>
    <property type="molecule type" value="Genomic_DNA"/>
</dbReference>
<dbReference type="RefSeq" id="WP_011206824.1">
    <property type="nucleotide sequence ID" value="NC_006361.1"/>
</dbReference>
<dbReference type="SMR" id="Q5Z354"/>
<dbReference type="STRING" id="247156.NFA_2950"/>
<dbReference type="GeneID" id="61131139"/>
<dbReference type="KEGG" id="nfa:NFA_2950"/>
<dbReference type="eggNOG" id="COG0353">
    <property type="taxonomic scope" value="Bacteria"/>
</dbReference>
<dbReference type="HOGENOM" id="CLU_060739_1_0_11"/>
<dbReference type="OrthoDB" id="9802672at2"/>
<dbReference type="Proteomes" id="UP000006820">
    <property type="component" value="Chromosome"/>
</dbReference>
<dbReference type="GO" id="GO:0003677">
    <property type="term" value="F:DNA binding"/>
    <property type="evidence" value="ECO:0007669"/>
    <property type="project" value="UniProtKB-UniRule"/>
</dbReference>
<dbReference type="GO" id="GO:0008270">
    <property type="term" value="F:zinc ion binding"/>
    <property type="evidence" value="ECO:0007669"/>
    <property type="project" value="UniProtKB-KW"/>
</dbReference>
<dbReference type="GO" id="GO:0006310">
    <property type="term" value="P:DNA recombination"/>
    <property type="evidence" value="ECO:0007669"/>
    <property type="project" value="UniProtKB-UniRule"/>
</dbReference>
<dbReference type="GO" id="GO:0006281">
    <property type="term" value="P:DNA repair"/>
    <property type="evidence" value="ECO:0007669"/>
    <property type="project" value="UniProtKB-UniRule"/>
</dbReference>
<dbReference type="CDD" id="cd01025">
    <property type="entry name" value="TOPRIM_recR"/>
    <property type="match status" value="1"/>
</dbReference>
<dbReference type="Gene3D" id="3.30.60.80">
    <property type="match status" value="1"/>
</dbReference>
<dbReference type="Gene3D" id="3.40.1360.10">
    <property type="match status" value="1"/>
</dbReference>
<dbReference type="Gene3D" id="6.10.250.240">
    <property type="match status" value="1"/>
</dbReference>
<dbReference type="Gene3D" id="1.10.8.420">
    <property type="entry name" value="RecR Domain 1"/>
    <property type="match status" value="1"/>
</dbReference>
<dbReference type="HAMAP" id="MF_00017">
    <property type="entry name" value="RecR"/>
    <property type="match status" value="1"/>
</dbReference>
<dbReference type="InterPro" id="IPR000093">
    <property type="entry name" value="DNA_Rcmb_RecR"/>
</dbReference>
<dbReference type="InterPro" id="IPR023627">
    <property type="entry name" value="Rcmb_RecR"/>
</dbReference>
<dbReference type="InterPro" id="IPR015967">
    <property type="entry name" value="Rcmb_RecR_Znf"/>
</dbReference>
<dbReference type="InterPro" id="IPR006171">
    <property type="entry name" value="TOPRIM_dom"/>
</dbReference>
<dbReference type="InterPro" id="IPR034137">
    <property type="entry name" value="TOPRIM_RecR"/>
</dbReference>
<dbReference type="NCBIfam" id="TIGR00615">
    <property type="entry name" value="recR"/>
    <property type="match status" value="1"/>
</dbReference>
<dbReference type="PANTHER" id="PTHR30446">
    <property type="entry name" value="RECOMBINATION PROTEIN RECR"/>
    <property type="match status" value="1"/>
</dbReference>
<dbReference type="PANTHER" id="PTHR30446:SF0">
    <property type="entry name" value="RECOMBINATION PROTEIN RECR"/>
    <property type="match status" value="1"/>
</dbReference>
<dbReference type="Pfam" id="PF21175">
    <property type="entry name" value="RecR_C"/>
    <property type="match status" value="1"/>
</dbReference>
<dbReference type="Pfam" id="PF21176">
    <property type="entry name" value="RecR_HhH"/>
    <property type="match status" value="1"/>
</dbReference>
<dbReference type="Pfam" id="PF02132">
    <property type="entry name" value="RecR_ZnF"/>
    <property type="match status" value="1"/>
</dbReference>
<dbReference type="Pfam" id="PF13662">
    <property type="entry name" value="Toprim_4"/>
    <property type="match status" value="1"/>
</dbReference>
<dbReference type="SMART" id="SM00493">
    <property type="entry name" value="TOPRIM"/>
    <property type="match status" value="1"/>
</dbReference>
<dbReference type="SUPFAM" id="SSF111304">
    <property type="entry name" value="Recombination protein RecR"/>
    <property type="match status" value="1"/>
</dbReference>
<dbReference type="PROSITE" id="PS01300">
    <property type="entry name" value="RECR"/>
    <property type="match status" value="1"/>
</dbReference>
<dbReference type="PROSITE" id="PS50880">
    <property type="entry name" value="TOPRIM"/>
    <property type="match status" value="1"/>
</dbReference>
<organism>
    <name type="scientific">Nocardia farcinica (strain IFM 10152)</name>
    <dbReference type="NCBI Taxonomy" id="247156"/>
    <lineage>
        <taxon>Bacteria</taxon>
        <taxon>Bacillati</taxon>
        <taxon>Actinomycetota</taxon>
        <taxon>Actinomycetes</taxon>
        <taxon>Mycobacteriales</taxon>
        <taxon>Nocardiaceae</taxon>
        <taxon>Nocardia</taxon>
    </lineage>
</organism>
<accession>Q5Z354</accession>
<reference key="1">
    <citation type="journal article" date="2004" name="Proc. Natl. Acad. Sci. U.S.A.">
        <title>The complete genomic sequence of Nocardia farcinica IFM 10152.</title>
        <authorList>
            <person name="Ishikawa J."/>
            <person name="Yamashita A."/>
            <person name="Mikami Y."/>
            <person name="Hoshino Y."/>
            <person name="Kurita H."/>
            <person name="Hotta K."/>
            <person name="Shiba T."/>
            <person name="Hattori M."/>
        </authorList>
    </citation>
    <scope>NUCLEOTIDE SEQUENCE [LARGE SCALE GENOMIC DNA]</scope>
    <source>
        <strain>IFM 10152</strain>
    </source>
</reference>
<protein>
    <recommendedName>
        <fullName evidence="1">Recombination protein RecR</fullName>
    </recommendedName>
</protein>
<feature type="chain" id="PRO_0000190356" description="Recombination protein RecR">
    <location>
        <begin position="1"/>
        <end position="202"/>
    </location>
</feature>
<feature type="domain" description="Toprim" evidence="1">
    <location>
        <begin position="79"/>
        <end position="179"/>
    </location>
</feature>
<feature type="zinc finger region" description="C4-type" evidence="1">
    <location>
        <begin position="56"/>
        <end position="71"/>
    </location>
</feature>